<accession>Q7YRU6</accession>
<organism>
    <name type="scientific">Oryctolagus cuniculus</name>
    <name type="common">Rabbit</name>
    <dbReference type="NCBI Taxonomy" id="9986"/>
    <lineage>
        <taxon>Eukaryota</taxon>
        <taxon>Metazoa</taxon>
        <taxon>Chordata</taxon>
        <taxon>Craniata</taxon>
        <taxon>Vertebrata</taxon>
        <taxon>Euteleostomi</taxon>
        <taxon>Mammalia</taxon>
        <taxon>Eutheria</taxon>
        <taxon>Euarchontoglires</taxon>
        <taxon>Glires</taxon>
        <taxon>Lagomorpha</taxon>
        <taxon>Leporidae</taxon>
        <taxon>Oryctolagus</taxon>
    </lineage>
</organism>
<evidence type="ECO:0000250" key="1"/>
<evidence type="ECO:0000250" key="2">
    <source>
        <dbReference type="UniProtKB" id="Q9WVL3"/>
    </source>
</evidence>
<evidence type="ECO:0000250" key="3">
    <source>
        <dbReference type="UniProtKB" id="Q9Y666"/>
    </source>
</evidence>
<evidence type="ECO:0000255" key="4"/>
<evidence type="ECO:0000256" key="5">
    <source>
        <dbReference type="SAM" id="MobiDB-lite"/>
    </source>
</evidence>
<evidence type="ECO:0000269" key="6">
    <source>
    </source>
</evidence>
<evidence type="ECO:0000305" key="7"/>
<evidence type="ECO:0000312" key="8">
    <source>
        <dbReference type="EMBL" id="AAP84988.1"/>
    </source>
</evidence>
<keyword id="KW-1003">Cell membrane</keyword>
<keyword id="KW-0868">Chloride</keyword>
<keyword id="KW-0325">Glycoprotein</keyword>
<keyword id="KW-0406">Ion transport</keyword>
<keyword id="KW-0472">Membrane</keyword>
<keyword id="KW-0479">Metal-binding</keyword>
<keyword id="KW-0597">Phosphoprotein</keyword>
<keyword id="KW-0630">Potassium</keyword>
<keyword id="KW-0633">Potassium transport</keyword>
<keyword id="KW-1185">Reference proteome</keyword>
<keyword id="KW-0769">Symport</keyword>
<keyword id="KW-0812">Transmembrane</keyword>
<keyword id="KW-1133">Transmembrane helix</keyword>
<keyword id="KW-0813">Transport</keyword>
<name>S12A7_RABIT</name>
<feature type="chain" id="PRO_0000299075" description="Solute carrier family 12 member 7">
    <location>
        <begin position="1"/>
        <end position="1106"/>
    </location>
</feature>
<feature type="topological domain" description="Cytoplasmic" evidence="7">
    <location>
        <begin position="1"/>
        <end position="143"/>
    </location>
</feature>
<feature type="transmembrane region" description="Discontinuously helical; Name=1" evidence="3">
    <location>
        <begin position="144"/>
        <end position="166"/>
    </location>
</feature>
<feature type="topological domain" description="Extracellular" evidence="7">
    <location>
        <begin position="167"/>
        <end position="173"/>
    </location>
</feature>
<feature type="transmembrane region" description="Helical; Name=2" evidence="3">
    <location>
        <begin position="174"/>
        <end position="196"/>
    </location>
</feature>
<feature type="topological domain" description="Cytoplasmic" evidence="7">
    <location>
        <begin position="197"/>
        <end position="220"/>
    </location>
</feature>
<feature type="transmembrane region" description="Helical; Name=3" evidence="3">
    <location>
        <begin position="221"/>
        <end position="249"/>
    </location>
</feature>
<feature type="topological domain" description="Extracellular" evidence="7">
    <location>
        <begin position="250"/>
        <end position="273"/>
    </location>
</feature>
<feature type="transmembrane region" description="Helical; Name=4" evidence="3">
    <location>
        <begin position="274"/>
        <end position="295"/>
    </location>
</feature>
<feature type="transmembrane region" description="Helical; Name=5" evidence="3">
    <location>
        <begin position="296"/>
        <end position="324"/>
    </location>
</feature>
<feature type="topological domain" description="Extracellular" evidence="7">
    <location>
        <begin position="325"/>
        <end position="443"/>
    </location>
</feature>
<feature type="transmembrane region" description="Helical; Name=6" evidence="3">
    <location>
        <begin position="444"/>
        <end position="464"/>
    </location>
</feature>
<feature type="topological domain" description="Cytoplasmic" evidence="7">
    <location>
        <begin position="465"/>
        <end position="474"/>
    </location>
</feature>
<feature type="transmembrane region" description="Helical; Name=7" evidence="3">
    <location>
        <begin position="475"/>
        <end position="497"/>
    </location>
</feature>
<feature type="topological domain" description="Extracellular" evidence="7">
    <location>
        <begin position="498"/>
        <end position="528"/>
    </location>
</feature>
<feature type="transmembrane region" description="Helical; Name=8" evidence="3">
    <location>
        <begin position="529"/>
        <end position="555"/>
    </location>
</feature>
<feature type="topological domain" description="Cytoplasmic" evidence="7">
    <location>
        <begin position="556"/>
        <end position="578"/>
    </location>
</feature>
<feature type="transmembrane region" description="Helical; Name=9" evidence="3">
    <location>
        <begin position="579"/>
        <end position="597"/>
    </location>
</feature>
<feature type="transmembrane region" description="Helical; Name=10" evidence="3">
    <location>
        <begin position="598"/>
        <end position="622"/>
    </location>
</feature>
<feature type="topological domain" description="Cytoplasmic" evidence="7">
    <location>
        <begin position="623"/>
        <end position="636"/>
    </location>
</feature>
<feature type="transmembrane region" description="Helical; Name=11" evidence="3">
    <location>
        <begin position="637"/>
        <end position="659"/>
    </location>
</feature>
<feature type="transmembrane region" description="Helical; Name=12" evidence="3">
    <location>
        <begin position="660"/>
        <end position="675"/>
    </location>
</feature>
<feature type="topological domain" description="Cytoplasmic" evidence="7">
    <location>
        <begin position="676"/>
        <end position="1106"/>
    </location>
</feature>
<feature type="region of interest" description="Disordered" evidence="5">
    <location>
        <begin position="17"/>
        <end position="83"/>
    </location>
</feature>
<feature type="region of interest" description="Scissor helix" evidence="3">
    <location>
        <begin position="688"/>
        <end position="704"/>
    </location>
</feature>
<feature type="region of interest" description="Disordered" evidence="5">
    <location>
        <begin position="980"/>
        <end position="999"/>
    </location>
</feature>
<feature type="binding site" evidence="3">
    <location>
        <position position="155"/>
    </location>
    <ligand>
        <name>K(+)</name>
        <dbReference type="ChEBI" id="CHEBI:29103"/>
    </ligand>
</feature>
<feature type="binding site" evidence="3">
    <location>
        <position position="156"/>
    </location>
    <ligand>
        <name>K(+)</name>
        <dbReference type="ChEBI" id="CHEBI:29103"/>
    </ligand>
</feature>
<feature type="binding site" evidence="3">
    <location>
        <position position="159"/>
    </location>
    <ligand>
        <name>chloride</name>
        <dbReference type="ChEBI" id="CHEBI:17996"/>
        <label>2</label>
    </ligand>
</feature>
<feature type="binding site" evidence="3">
    <location>
        <position position="453"/>
    </location>
    <ligand>
        <name>chloride</name>
        <dbReference type="ChEBI" id="CHEBI:17996"/>
        <label>2</label>
    </ligand>
</feature>
<feature type="binding site" evidence="3">
    <location>
        <position position="453"/>
    </location>
    <ligand>
        <name>K(+)</name>
        <dbReference type="ChEBI" id="CHEBI:29103"/>
    </ligand>
</feature>
<feature type="binding site" evidence="3">
    <location>
        <position position="456"/>
    </location>
    <ligand>
        <name>K(+)</name>
        <dbReference type="ChEBI" id="CHEBI:29103"/>
    </ligand>
</feature>
<feature type="binding site" evidence="3">
    <location>
        <position position="457"/>
    </location>
    <ligand>
        <name>chloride</name>
        <dbReference type="ChEBI" id="CHEBI:17996"/>
        <label>1</label>
    </ligand>
</feature>
<feature type="binding site" evidence="3">
    <location>
        <position position="458"/>
    </location>
    <ligand>
        <name>chloride</name>
        <dbReference type="ChEBI" id="CHEBI:17996"/>
        <label>1</label>
    </ligand>
</feature>
<feature type="binding site" evidence="3">
    <location>
        <position position="613"/>
    </location>
    <ligand>
        <name>chloride</name>
        <dbReference type="ChEBI" id="CHEBI:17996"/>
        <label>1</label>
    </ligand>
</feature>
<feature type="modified residue" description="Phosphoserine" evidence="3">
    <location>
        <position position="74"/>
    </location>
</feature>
<feature type="modified residue" description="Phosphoserine" evidence="3">
    <location>
        <position position="86"/>
    </location>
</feature>
<feature type="modified residue" description="Phosphothreonine" evidence="2">
    <location>
        <position position="996"/>
    </location>
</feature>
<feature type="modified residue" description="Phosphothreonine" evidence="2">
    <location>
        <position position="1003"/>
    </location>
</feature>
<feature type="glycosylation site" description="N-linked (GlcNAc...) asparagine" evidence="4">
    <location>
        <position position="336"/>
    </location>
</feature>
<feature type="glycosylation site" description="N-linked (GlcNAc...) asparagine" evidence="4">
    <location>
        <position position="355"/>
    </location>
</feature>
<feature type="glycosylation site" description="N-linked (GlcNAc...) asparagine" evidence="4">
    <location>
        <position position="384"/>
    </location>
</feature>
<reference evidence="7 8" key="1">
    <citation type="journal article" date="2003" name="Am. J. Physiol.">
        <title>Cloning and localization of KCC4 in rabbit kidney: expression in distal convoluted tubule.</title>
        <authorList>
            <person name="Velazquez H."/>
            <person name="Silva T."/>
        </authorList>
    </citation>
    <scope>NUCLEOTIDE SEQUENCE [MRNA]</scope>
    <scope>SUBCELLULAR LOCATION</scope>
    <scope>TISSUE SPECIFICITY</scope>
    <source>
        <tissue evidence="8">Kidney</tissue>
    </source>
</reference>
<comment type="function">
    <text evidence="1 3">Mediates electroneutral potassium-chloride cotransport when activated by cell swelling (By similarity). May mediate K(+) uptake into Deiters' cells in the cochlea and contribute to K(+) recycling in the inner ear. Important for the survival of cochlear outer and inner hair cells and the maintenance of the organ of Corti. May be required for basolateral Cl(-) extrusion in the kidney and contribute to renal acidification (By similarity).</text>
</comment>
<comment type="catalytic activity">
    <reaction evidence="3">
        <text>K(+)(in) + chloride(in) = K(+)(out) + chloride(out)</text>
        <dbReference type="Rhea" id="RHEA:72427"/>
        <dbReference type="ChEBI" id="CHEBI:17996"/>
        <dbReference type="ChEBI" id="CHEBI:29103"/>
    </reaction>
</comment>
<comment type="activity regulation">
    <text evidence="3">Activated by N-ethylmaleimide (NEM). Inhibited by furosemide, DIDS and bumetanide. The inhibition is much stronger in the presence of 50 mM K(+) in the uptake medium. Inhibited by DIOA. Inhibited by WNK3.</text>
</comment>
<comment type="subunit">
    <text evidence="3">Homodimer; adopts a domain-swap conformation at the scissor helices connecting the transmembrane domain and C-terminal domain (By similarity). Heterodimer with K-Cl cotransporter SLC12A5 (By similarity).</text>
</comment>
<comment type="subcellular location">
    <subcellularLocation>
        <location evidence="6">Cell membrane</location>
        <topology evidence="6">Multi-pass membrane protein</topology>
    </subcellularLocation>
</comment>
<comment type="tissue specificity">
    <text evidence="6">Widely expressed. Higher levels in heart, kidney and lung (at protein level).</text>
</comment>
<comment type="similarity">
    <text evidence="7">Belongs to the SLC12A transporter family. K/Cl co-transporter subfamily.</text>
</comment>
<proteinExistence type="evidence at protein level"/>
<gene>
    <name evidence="2" type="primary">SLC12A7</name>
    <name evidence="8" type="synonym">KCC4</name>
</gene>
<dbReference type="EMBL" id="AF538347">
    <property type="protein sequence ID" value="AAP84988.1"/>
    <property type="molecule type" value="mRNA"/>
</dbReference>
<dbReference type="RefSeq" id="NP_001075592.1">
    <property type="nucleotide sequence ID" value="NM_001082123.1"/>
</dbReference>
<dbReference type="SMR" id="Q7YRU6"/>
<dbReference type="FunCoup" id="Q7YRU6">
    <property type="interactions" value="24"/>
</dbReference>
<dbReference type="GlyCosmos" id="Q7YRU6">
    <property type="glycosylation" value="3 sites, No reported glycans"/>
</dbReference>
<dbReference type="PaxDb" id="9986-ENSOCUP00000018959"/>
<dbReference type="GeneID" id="100008847"/>
<dbReference type="KEGG" id="ocu:100008847"/>
<dbReference type="CTD" id="10723"/>
<dbReference type="eggNOG" id="KOG2082">
    <property type="taxonomic scope" value="Eukaryota"/>
</dbReference>
<dbReference type="InParanoid" id="Q7YRU6"/>
<dbReference type="OrthoDB" id="2020542at2759"/>
<dbReference type="Proteomes" id="UP000001811">
    <property type="component" value="Unplaced"/>
</dbReference>
<dbReference type="GO" id="GO:0005886">
    <property type="term" value="C:plasma membrane"/>
    <property type="evidence" value="ECO:0007669"/>
    <property type="project" value="UniProtKB-SubCell"/>
</dbReference>
<dbReference type="GO" id="GO:0045202">
    <property type="term" value="C:synapse"/>
    <property type="evidence" value="ECO:0007669"/>
    <property type="project" value="GOC"/>
</dbReference>
<dbReference type="GO" id="GO:0046872">
    <property type="term" value="F:metal ion binding"/>
    <property type="evidence" value="ECO:0007669"/>
    <property type="project" value="UniProtKB-KW"/>
</dbReference>
<dbReference type="GO" id="GO:0015379">
    <property type="term" value="F:potassium:chloride symporter activity"/>
    <property type="evidence" value="ECO:0000250"/>
    <property type="project" value="UniProtKB"/>
</dbReference>
<dbReference type="GO" id="GO:0006884">
    <property type="term" value="P:cell volume homeostasis"/>
    <property type="evidence" value="ECO:0007669"/>
    <property type="project" value="TreeGrafter"/>
</dbReference>
<dbReference type="GO" id="GO:0007268">
    <property type="term" value="P:chemical synaptic transmission"/>
    <property type="evidence" value="ECO:0007669"/>
    <property type="project" value="TreeGrafter"/>
</dbReference>
<dbReference type="GO" id="GO:0055064">
    <property type="term" value="P:chloride ion homeostasis"/>
    <property type="evidence" value="ECO:0007669"/>
    <property type="project" value="TreeGrafter"/>
</dbReference>
<dbReference type="GO" id="GO:0055075">
    <property type="term" value="P:potassium ion homeostasis"/>
    <property type="evidence" value="ECO:0007669"/>
    <property type="project" value="TreeGrafter"/>
</dbReference>
<dbReference type="GO" id="GO:1990573">
    <property type="term" value="P:potassium ion import across plasma membrane"/>
    <property type="evidence" value="ECO:0007669"/>
    <property type="project" value="TreeGrafter"/>
</dbReference>
<dbReference type="GO" id="GO:0071805">
    <property type="term" value="P:potassium ion transmembrane transport"/>
    <property type="evidence" value="ECO:0000250"/>
    <property type="project" value="UniProtKB"/>
</dbReference>
<dbReference type="FunFam" id="1.20.1740.10:FF:000049">
    <property type="entry name" value="Solute carrier family 12 (potassium/chloride transporter), member 4"/>
    <property type="match status" value="1"/>
</dbReference>
<dbReference type="FunFam" id="1.20.1740.10:FF:000040">
    <property type="entry name" value="Solute carrier family 12 member 6"/>
    <property type="match status" value="1"/>
</dbReference>
<dbReference type="Gene3D" id="1.20.1740.10">
    <property type="entry name" value="Amino acid/polyamine transporter I"/>
    <property type="match status" value="1"/>
</dbReference>
<dbReference type="InterPro" id="IPR004841">
    <property type="entry name" value="AA-permease/SLC12A_dom"/>
</dbReference>
<dbReference type="InterPro" id="IPR000076">
    <property type="entry name" value="KCL_cotranspt"/>
</dbReference>
<dbReference type="InterPro" id="IPR018491">
    <property type="entry name" value="SLC12_C"/>
</dbReference>
<dbReference type="InterPro" id="IPR004842">
    <property type="entry name" value="SLC12A_fam"/>
</dbReference>
<dbReference type="NCBIfam" id="TIGR00930">
    <property type="entry name" value="2a30"/>
    <property type="match status" value="1"/>
</dbReference>
<dbReference type="PANTHER" id="PTHR11827:SF47">
    <property type="entry name" value="SOLUTE CARRIER FAMILY 12 MEMBER 7"/>
    <property type="match status" value="1"/>
</dbReference>
<dbReference type="PANTHER" id="PTHR11827">
    <property type="entry name" value="SOLUTE CARRIER FAMILY 12, CATION COTRANSPORTERS"/>
    <property type="match status" value="1"/>
</dbReference>
<dbReference type="Pfam" id="PF00324">
    <property type="entry name" value="AA_permease"/>
    <property type="match status" value="2"/>
</dbReference>
<dbReference type="Pfam" id="PF03522">
    <property type="entry name" value="SLC12"/>
    <property type="match status" value="2"/>
</dbReference>
<dbReference type="PRINTS" id="PR01081">
    <property type="entry name" value="KCLTRNSPORT"/>
</dbReference>
<protein>
    <recommendedName>
        <fullName>Solute carrier family 12 member 7</fullName>
    </recommendedName>
    <alternativeName>
        <fullName>K-Cl cotransporter 4</fullName>
    </alternativeName>
    <alternativeName>
        <fullName>Potassium-chloride cotransporter isoform 4</fullName>
    </alternativeName>
</protein>
<sequence>MVYTALTWQRLHGTAAGLVPSHLPQEGEKGSTHPTPRPLGTTPRVTAHIEPPRPWAAGAEPPLPAGDGSARESSPFIGSAAADGDSLLEGKNMALFEEEMDSNPMVSSLLNKLANYTNLSQGVVDHEEAEDSRPRESKAPCMGTFIGVYLPCLQNILGVILFLRLTWIVGAAGVLESFLVVSMCCTCTMLTAVSMSAIATNGVVPAGGSYYMISRSLGPEFGGAVGLCFYLGTTFAGAMYILGTIEIFLTYISPGAAVFQAETPEGEAAALLHNMRVYGSCTLALMAVVVFVGVKYVNKLALVFLACVVLSILAIYAGVIKTAFDPPDIPVCLLGNRTLARRGFDTCAKVRAVSNGTATTALWGLFCNGSSLDTACNEYFAQNNVTEIQGIPGVASGVLLDNLWSAYSDRGAFVEKKGVASVPTPEDGRASGLPYVLSDITTYFTVLVGIYFPSVTGIMAGSNRSGDLKDAQKSIPTGTILAIVTTSFIYLSCIVLFGACIEGVVLRDKFGEALQGNLVIGMLAWPSPWVIVIGSFFSTCGAGLQSLTGAPRLLQAIARDGIVPFLQVFGHGKANGEPTWALLLTALICETGILIASLDSVAPILSMFFLMCYMFVNLACAVQTLLRTPNWRPRFKYYHWTLSFLGMSLCLALMFICSWYYALFAMLIAGCIYKYIEYRGAEKEWGDGIRGLSLNAARYALLRVEHGPPHTKNWRPQVLVMLTLDAEQRVTHPRLLSFTSQLKAGKGLTIVGSVLEGTFLDKHVEAQRAEENIRALMGAEKMKGFCQLVVSSSLRDGCSHLIQAAGLGGMKHNTVLMAWPEAWKQPDSPYSWKYFVDTVRDTTAAQQALLVAKNIDAFPQNQERFSEGSIDVWWVVHDGGMLMLLPFLLRQHKVWRKCRMRIFTVAQVDDNSVQMKKDLQMFLYHLRISAEVEVVEMVENDISAFTYEKTLLMEQRSQMLKQMQLTKGEREREAQLIHDRNTASHTAASRAQAPPTPDKVQMTWTKEKLTAEKHRNKDAGAAGFRDLFSLKPDHSNVRRMHTAVKLNGVVLSRSQDAQLVLLNMPGPPKNRQGDENYMEFLEVLTEGLNRVVLVRGGGREVITIYS</sequence>